<sequence length="142" mass="15782">MQLTSFTDYGLRALIYMASLPEGKMTSITEVTQVYGVSRNHMVKIINQLSHMGFVEAIRGKNGGIRLGKPAADIIVGEVVRALEPLSLVNCSAEFCHITPACRLKLVLNQAIEQFLKELDRHTLAELVENNSPLYKLLLEDV</sequence>
<accession>B4F272</accession>
<organism>
    <name type="scientific">Proteus mirabilis (strain HI4320)</name>
    <dbReference type="NCBI Taxonomy" id="529507"/>
    <lineage>
        <taxon>Bacteria</taxon>
        <taxon>Pseudomonadati</taxon>
        <taxon>Pseudomonadota</taxon>
        <taxon>Gammaproteobacteria</taxon>
        <taxon>Enterobacterales</taxon>
        <taxon>Morganellaceae</taxon>
        <taxon>Proteus</taxon>
    </lineage>
</organism>
<name>NSRR_PROMH</name>
<proteinExistence type="inferred from homology"/>
<protein>
    <recommendedName>
        <fullName evidence="1">HTH-type transcriptional repressor NsrR</fullName>
    </recommendedName>
</protein>
<keyword id="KW-0001">2Fe-2S</keyword>
<keyword id="KW-0238">DNA-binding</keyword>
<keyword id="KW-0408">Iron</keyword>
<keyword id="KW-0411">Iron-sulfur</keyword>
<keyword id="KW-0479">Metal-binding</keyword>
<keyword id="KW-1185">Reference proteome</keyword>
<keyword id="KW-0678">Repressor</keyword>
<keyword id="KW-0804">Transcription</keyword>
<keyword id="KW-0805">Transcription regulation</keyword>
<feature type="chain" id="PRO_1000138125" description="HTH-type transcriptional repressor NsrR">
    <location>
        <begin position="1"/>
        <end position="142"/>
    </location>
</feature>
<feature type="domain" description="HTH rrf2-type" evidence="1">
    <location>
        <begin position="2"/>
        <end position="129"/>
    </location>
</feature>
<feature type="DNA-binding region" description="H-T-H motif" evidence="1">
    <location>
        <begin position="28"/>
        <end position="51"/>
    </location>
</feature>
<feature type="binding site" evidence="1">
    <location>
        <position position="91"/>
    </location>
    <ligand>
        <name>[2Fe-2S] cluster</name>
        <dbReference type="ChEBI" id="CHEBI:190135"/>
    </ligand>
</feature>
<feature type="binding site" evidence="1">
    <location>
        <position position="96"/>
    </location>
    <ligand>
        <name>[2Fe-2S] cluster</name>
        <dbReference type="ChEBI" id="CHEBI:190135"/>
    </ligand>
</feature>
<feature type="binding site" evidence="1">
    <location>
        <position position="102"/>
    </location>
    <ligand>
        <name>[2Fe-2S] cluster</name>
        <dbReference type="ChEBI" id="CHEBI:190135"/>
    </ligand>
</feature>
<comment type="function">
    <text evidence="1">Nitric oxide-sensitive repressor of genes involved in protecting the cell against nitrosative stress. May require iron for activity.</text>
</comment>
<comment type="cofactor">
    <cofactor evidence="1">
        <name>[2Fe-2S] cluster</name>
        <dbReference type="ChEBI" id="CHEBI:190135"/>
    </cofactor>
    <text evidence="1">Binds 1 [2Fe-2S] cluster per subunit.</text>
</comment>
<evidence type="ECO:0000255" key="1">
    <source>
        <dbReference type="HAMAP-Rule" id="MF_01177"/>
    </source>
</evidence>
<gene>
    <name evidence="1" type="primary">nsrR</name>
    <name type="ordered locus">PMI3371</name>
</gene>
<dbReference type="EMBL" id="AM942759">
    <property type="protein sequence ID" value="CAR46611.1"/>
    <property type="molecule type" value="Genomic_DNA"/>
</dbReference>
<dbReference type="RefSeq" id="WP_004249627.1">
    <property type="nucleotide sequence ID" value="NC_010554.1"/>
</dbReference>
<dbReference type="SMR" id="B4F272"/>
<dbReference type="EnsemblBacteria" id="CAR46611">
    <property type="protein sequence ID" value="CAR46611"/>
    <property type="gene ID" value="PMI3371"/>
</dbReference>
<dbReference type="GeneID" id="6801969"/>
<dbReference type="KEGG" id="pmr:PMI3371"/>
<dbReference type="eggNOG" id="COG1959">
    <property type="taxonomic scope" value="Bacteria"/>
</dbReference>
<dbReference type="HOGENOM" id="CLU_107144_2_0_6"/>
<dbReference type="Proteomes" id="UP000008319">
    <property type="component" value="Chromosome"/>
</dbReference>
<dbReference type="GO" id="GO:0005829">
    <property type="term" value="C:cytosol"/>
    <property type="evidence" value="ECO:0007669"/>
    <property type="project" value="TreeGrafter"/>
</dbReference>
<dbReference type="GO" id="GO:0051537">
    <property type="term" value="F:2 iron, 2 sulfur cluster binding"/>
    <property type="evidence" value="ECO:0007669"/>
    <property type="project" value="UniProtKB-KW"/>
</dbReference>
<dbReference type="GO" id="GO:0003700">
    <property type="term" value="F:DNA-binding transcription factor activity"/>
    <property type="evidence" value="ECO:0007669"/>
    <property type="project" value="UniProtKB-UniRule"/>
</dbReference>
<dbReference type="GO" id="GO:0003690">
    <property type="term" value="F:double-stranded DNA binding"/>
    <property type="evidence" value="ECO:0007669"/>
    <property type="project" value="UniProtKB-UniRule"/>
</dbReference>
<dbReference type="GO" id="GO:0005506">
    <property type="term" value="F:iron ion binding"/>
    <property type="evidence" value="ECO:0007669"/>
    <property type="project" value="UniProtKB-UniRule"/>
</dbReference>
<dbReference type="GO" id="GO:0045892">
    <property type="term" value="P:negative regulation of DNA-templated transcription"/>
    <property type="evidence" value="ECO:0007669"/>
    <property type="project" value="InterPro"/>
</dbReference>
<dbReference type="FunFam" id="1.10.10.10:FF:000105">
    <property type="entry name" value="HTH-type transcriptional repressor NsrR"/>
    <property type="match status" value="1"/>
</dbReference>
<dbReference type="Gene3D" id="1.10.10.10">
    <property type="entry name" value="Winged helix-like DNA-binding domain superfamily/Winged helix DNA-binding domain"/>
    <property type="match status" value="1"/>
</dbReference>
<dbReference type="HAMAP" id="MF_01177">
    <property type="entry name" value="HTH_type_NsrR"/>
    <property type="match status" value="1"/>
</dbReference>
<dbReference type="InterPro" id="IPR000944">
    <property type="entry name" value="Tscrpt_reg_Rrf2"/>
</dbReference>
<dbReference type="InterPro" id="IPR023761">
    <property type="entry name" value="Tscrpt_rep_HTH_NsrR"/>
</dbReference>
<dbReference type="InterPro" id="IPR036388">
    <property type="entry name" value="WH-like_DNA-bd_sf"/>
</dbReference>
<dbReference type="InterPro" id="IPR036390">
    <property type="entry name" value="WH_DNA-bd_sf"/>
</dbReference>
<dbReference type="NCBIfam" id="NF008240">
    <property type="entry name" value="PRK11014.1"/>
    <property type="match status" value="1"/>
</dbReference>
<dbReference type="NCBIfam" id="TIGR00738">
    <property type="entry name" value="rrf2_super"/>
    <property type="match status" value="1"/>
</dbReference>
<dbReference type="PANTHER" id="PTHR33221:SF4">
    <property type="entry name" value="HTH-TYPE TRANSCRIPTIONAL REPRESSOR NSRR"/>
    <property type="match status" value="1"/>
</dbReference>
<dbReference type="PANTHER" id="PTHR33221">
    <property type="entry name" value="WINGED HELIX-TURN-HELIX TRANSCRIPTIONAL REGULATOR, RRF2 FAMILY"/>
    <property type="match status" value="1"/>
</dbReference>
<dbReference type="Pfam" id="PF02082">
    <property type="entry name" value="Rrf2"/>
    <property type="match status" value="1"/>
</dbReference>
<dbReference type="SUPFAM" id="SSF46785">
    <property type="entry name" value="Winged helix' DNA-binding domain"/>
    <property type="match status" value="1"/>
</dbReference>
<dbReference type="PROSITE" id="PS51197">
    <property type="entry name" value="HTH_RRF2_2"/>
    <property type="match status" value="1"/>
</dbReference>
<reference key="1">
    <citation type="journal article" date="2008" name="J. Bacteriol.">
        <title>Complete genome sequence of uropathogenic Proteus mirabilis, a master of both adherence and motility.</title>
        <authorList>
            <person name="Pearson M.M."/>
            <person name="Sebaihia M."/>
            <person name="Churcher C."/>
            <person name="Quail M.A."/>
            <person name="Seshasayee A.S."/>
            <person name="Luscombe N.M."/>
            <person name="Abdellah Z."/>
            <person name="Arrosmith C."/>
            <person name="Atkin B."/>
            <person name="Chillingworth T."/>
            <person name="Hauser H."/>
            <person name="Jagels K."/>
            <person name="Moule S."/>
            <person name="Mungall K."/>
            <person name="Norbertczak H."/>
            <person name="Rabbinowitsch E."/>
            <person name="Walker D."/>
            <person name="Whithead S."/>
            <person name="Thomson N.R."/>
            <person name="Rather P.N."/>
            <person name="Parkhill J."/>
            <person name="Mobley H.L.T."/>
        </authorList>
    </citation>
    <scope>NUCLEOTIDE SEQUENCE [LARGE SCALE GENOMIC DNA]</scope>
    <source>
        <strain>HI4320</strain>
    </source>
</reference>